<dbReference type="EC" id="1.1.1.37" evidence="1"/>
<dbReference type="EMBL" id="CR925677">
    <property type="protein sequence ID" value="CAI27870.1"/>
    <property type="molecule type" value="Genomic_DNA"/>
</dbReference>
<dbReference type="SMR" id="Q5FGT9"/>
<dbReference type="KEGG" id="erg:ERGA_CDS_04180"/>
<dbReference type="HOGENOM" id="CLU_045401_2_1_5"/>
<dbReference type="OrthoDB" id="9802969at2"/>
<dbReference type="Proteomes" id="UP000000533">
    <property type="component" value="Chromosome"/>
</dbReference>
<dbReference type="GO" id="GO:0004459">
    <property type="term" value="F:L-lactate dehydrogenase activity"/>
    <property type="evidence" value="ECO:0007669"/>
    <property type="project" value="TreeGrafter"/>
</dbReference>
<dbReference type="GO" id="GO:0030060">
    <property type="term" value="F:L-malate dehydrogenase (NAD+) activity"/>
    <property type="evidence" value="ECO:0007669"/>
    <property type="project" value="UniProtKB-UniRule"/>
</dbReference>
<dbReference type="GO" id="GO:0006089">
    <property type="term" value="P:lactate metabolic process"/>
    <property type="evidence" value="ECO:0007669"/>
    <property type="project" value="TreeGrafter"/>
</dbReference>
<dbReference type="GO" id="GO:0006099">
    <property type="term" value="P:tricarboxylic acid cycle"/>
    <property type="evidence" value="ECO:0007669"/>
    <property type="project" value="UniProtKB-UniRule"/>
</dbReference>
<dbReference type="CDD" id="cd01339">
    <property type="entry name" value="LDH-like_MDH"/>
    <property type="match status" value="1"/>
</dbReference>
<dbReference type="FunFam" id="3.40.50.720:FF:000018">
    <property type="entry name" value="Malate dehydrogenase"/>
    <property type="match status" value="1"/>
</dbReference>
<dbReference type="FunFam" id="3.90.110.10:FF:000004">
    <property type="entry name" value="Malate dehydrogenase"/>
    <property type="match status" value="1"/>
</dbReference>
<dbReference type="Gene3D" id="3.90.110.10">
    <property type="entry name" value="Lactate dehydrogenase/glycoside hydrolase, family 4, C-terminal"/>
    <property type="match status" value="1"/>
</dbReference>
<dbReference type="Gene3D" id="3.40.50.720">
    <property type="entry name" value="NAD(P)-binding Rossmann-like Domain"/>
    <property type="match status" value="1"/>
</dbReference>
<dbReference type="HAMAP" id="MF_00487">
    <property type="entry name" value="Malate_dehydrog_3"/>
    <property type="match status" value="1"/>
</dbReference>
<dbReference type="InterPro" id="IPR001557">
    <property type="entry name" value="L-lactate/malate_DH"/>
</dbReference>
<dbReference type="InterPro" id="IPR022383">
    <property type="entry name" value="Lactate/malate_DH_C"/>
</dbReference>
<dbReference type="InterPro" id="IPR001236">
    <property type="entry name" value="Lactate/malate_DH_N"/>
</dbReference>
<dbReference type="InterPro" id="IPR015955">
    <property type="entry name" value="Lactate_DH/Glyco_Ohase_4_C"/>
</dbReference>
<dbReference type="InterPro" id="IPR011275">
    <property type="entry name" value="Malate_DH_type3"/>
</dbReference>
<dbReference type="InterPro" id="IPR036291">
    <property type="entry name" value="NAD(P)-bd_dom_sf"/>
</dbReference>
<dbReference type="NCBIfam" id="TIGR01763">
    <property type="entry name" value="MalateDH_bact"/>
    <property type="match status" value="1"/>
</dbReference>
<dbReference type="NCBIfam" id="NF004863">
    <property type="entry name" value="PRK06223.1"/>
    <property type="match status" value="1"/>
</dbReference>
<dbReference type="PANTHER" id="PTHR43128">
    <property type="entry name" value="L-2-HYDROXYCARBOXYLATE DEHYDROGENASE (NAD(P)(+))"/>
    <property type="match status" value="1"/>
</dbReference>
<dbReference type="PANTHER" id="PTHR43128:SF16">
    <property type="entry name" value="L-LACTATE DEHYDROGENASE"/>
    <property type="match status" value="1"/>
</dbReference>
<dbReference type="Pfam" id="PF02866">
    <property type="entry name" value="Ldh_1_C"/>
    <property type="match status" value="1"/>
</dbReference>
<dbReference type="Pfam" id="PF00056">
    <property type="entry name" value="Ldh_1_N"/>
    <property type="match status" value="1"/>
</dbReference>
<dbReference type="PIRSF" id="PIRSF000102">
    <property type="entry name" value="Lac_mal_DH"/>
    <property type="match status" value="1"/>
</dbReference>
<dbReference type="PRINTS" id="PR00086">
    <property type="entry name" value="LLDHDRGNASE"/>
</dbReference>
<dbReference type="SUPFAM" id="SSF56327">
    <property type="entry name" value="LDH C-terminal domain-like"/>
    <property type="match status" value="1"/>
</dbReference>
<dbReference type="SUPFAM" id="SSF51735">
    <property type="entry name" value="NAD(P)-binding Rossmann-fold domains"/>
    <property type="match status" value="1"/>
</dbReference>
<accession>Q5FGT9</accession>
<comment type="function">
    <text evidence="1">Catalyzes the reversible oxidation of malate to oxaloacetate.</text>
</comment>
<comment type="catalytic activity">
    <reaction evidence="1">
        <text>(S)-malate + NAD(+) = oxaloacetate + NADH + H(+)</text>
        <dbReference type="Rhea" id="RHEA:21432"/>
        <dbReference type="ChEBI" id="CHEBI:15378"/>
        <dbReference type="ChEBI" id="CHEBI:15589"/>
        <dbReference type="ChEBI" id="CHEBI:16452"/>
        <dbReference type="ChEBI" id="CHEBI:57540"/>
        <dbReference type="ChEBI" id="CHEBI:57945"/>
        <dbReference type="EC" id="1.1.1.37"/>
    </reaction>
</comment>
<comment type="similarity">
    <text evidence="1">Belongs to the LDH/MDH superfamily. MDH type 3 family.</text>
</comment>
<evidence type="ECO:0000255" key="1">
    <source>
        <dbReference type="HAMAP-Rule" id="MF_00487"/>
    </source>
</evidence>
<gene>
    <name evidence="1" type="primary">mdh</name>
    <name type="ordered locus">ERGA_CDS_04180</name>
</gene>
<reference key="1">
    <citation type="journal article" date="2006" name="J. Bacteriol.">
        <title>Comparative genomic analysis of three strains of Ehrlichia ruminantium reveals an active process of genome size plasticity.</title>
        <authorList>
            <person name="Frutos R."/>
            <person name="Viari A."/>
            <person name="Ferraz C."/>
            <person name="Morgat A."/>
            <person name="Eychenie S."/>
            <person name="Kandassamy Y."/>
            <person name="Chantal I."/>
            <person name="Bensaid A."/>
            <person name="Coissac E."/>
            <person name="Vachiery N."/>
            <person name="Demaille J."/>
            <person name="Martinez D."/>
        </authorList>
    </citation>
    <scope>NUCLEOTIDE SEQUENCE [LARGE SCALE GENOMIC DNA]</scope>
    <source>
        <strain>Gardel</strain>
    </source>
</reference>
<feature type="chain" id="PRO_0000113450" description="Malate dehydrogenase">
    <location>
        <begin position="1"/>
        <end position="317"/>
    </location>
</feature>
<feature type="active site" description="Proton acceptor" evidence="1">
    <location>
        <position position="181"/>
    </location>
</feature>
<feature type="binding site" evidence="1">
    <location>
        <begin position="15"/>
        <end position="20"/>
    </location>
    <ligand>
        <name>NAD(+)</name>
        <dbReference type="ChEBI" id="CHEBI:57540"/>
    </ligand>
</feature>
<feature type="binding site" evidence="1">
    <location>
        <position position="39"/>
    </location>
    <ligand>
        <name>NAD(+)</name>
        <dbReference type="ChEBI" id="CHEBI:57540"/>
    </ligand>
</feature>
<feature type="binding site" evidence="1">
    <location>
        <position position="88"/>
    </location>
    <ligand>
        <name>substrate</name>
    </ligand>
</feature>
<feature type="binding site" evidence="1">
    <location>
        <position position="94"/>
    </location>
    <ligand>
        <name>substrate</name>
    </ligand>
</feature>
<feature type="binding site" evidence="1">
    <location>
        <position position="101"/>
    </location>
    <ligand>
        <name>NAD(+)</name>
        <dbReference type="ChEBI" id="CHEBI:57540"/>
    </ligand>
</feature>
<feature type="binding site" evidence="1">
    <location>
        <begin position="124"/>
        <end position="126"/>
    </location>
    <ligand>
        <name>NAD(+)</name>
        <dbReference type="ChEBI" id="CHEBI:57540"/>
    </ligand>
</feature>
<feature type="binding site" evidence="1">
    <location>
        <position position="126"/>
    </location>
    <ligand>
        <name>substrate</name>
    </ligand>
</feature>
<feature type="binding site" evidence="1">
    <location>
        <position position="157"/>
    </location>
    <ligand>
        <name>substrate</name>
    </ligand>
</feature>
<proteinExistence type="inferred from homology"/>
<organism>
    <name type="scientific">Ehrlichia ruminantium (strain Gardel)</name>
    <dbReference type="NCBI Taxonomy" id="302409"/>
    <lineage>
        <taxon>Bacteria</taxon>
        <taxon>Pseudomonadati</taxon>
        <taxon>Pseudomonadota</taxon>
        <taxon>Alphaproteobacteria</taxon>
        <taxon>Rickettsiales</taxon>
        <taxon>Anaplasmataceae</taxon>
        <taxon>Ehrlichia</taxon>
    </lineage>
</organism>
<protein>
    <recommendedName>
        <fullName evidence="1">Malate dehydrogenase</fullName>
        <ecNumber evidence="1">1.1.1.37</ecNumber>
    </recommendedName>
</protein>
<keyword id="KW-0520">NAD</keyword>
<keyword id="KW-0560">Oxidoreductase</keyword>
<keyword id="KW-0816">Tricarboxylic acid cycle</keyword>
<name>MDH_EHRRG</name>
<sequence>MRDMMIQSKKIALIGSGNIGGMIAYLIRLKNLGDVVLLDINDGMAKGKALDIAESSPIGKYNGEIFGTNNYADIENADAIIVTAGITRKPGMSRDDLISTNVNIIKEIATNIAKYAPNAFVIVVTNPLDVMVLAMYRYSHLPSNMIVGMAGVLDSARFSYFIAKELNVSVESVDSLVLGGHGDIMLPLIRYSSVSGVSIADLIKLGMITHDKVTEIVERTRKGGEEIVSLLKTGSAYYAPAESAVLMLDSYLNDKKLMLPCSAYLKGEYGVHDLFVGVPIIIGKNGVEKIVELQLTEEENSIFNNSVALIQNLVANI</sequence>